<feature type="chain" id="PRO_0000365602" description="Putative rho GDP-dissociation inhibitor 1">
    <location>
        <begin position="1"/>
        <end position="197"/>
    </location>
</feature>
<dbReference type="EMBL" id="AY044085">
    <property type="protein sequence ID" value="AAK95683.1"/>
    <property type="molecule type" value="Genomic_DNA"/>
</dbReference>
<dbReference type="EMBL" id="AAFI02000175">
    <property type="protein sequence ID" value="EAL61886.1"/>
    <property type="molecule type" value="Genomic_DNA"/>
</dbReference>
<dbReference type="RefSeq" id="XP_635396.1">
    <property type="nucleotide sequence ID" value="XM_630304.1"/>
</dbReference>
<dbReference type="SMR" id="Q95UQ1"/>
<dbReference type="FunCoup" id="Q95UQ1">
    <property type="interactions" value="404"/>
</dbReference>
<dbReference type="STRING" id="44689.Q95UQ1"/>
<dbReference type="PaxDb" id="44689-DDB0216235"/>
<dbReference type="EnsemblProtists" id="EAL61886">
    <property type="protein sequence ID" value="EAL61886"/>
    <property type="gene ID" value="DDB_G0291077"/>
</dbReference>
<dbReference type="GeneID" id="8627980"/>
<dbReference type="KEGG" id="ddi:DDB_G0291077"/>
<dbReference type="dictyBase" id="DDB_G0291077">
    <property type="gene designation" value="rdiA"/>
</dbReference>
<dbReference type="VEuPathDB" id="AmoebaDB:DDB_G0291077"/>
<dbReference type="eggNOG" id="KOG3205">
    <property type="taxonomic scope" value="Eukaryota"/>
</dbReference>
<dbReference type="HOGENOM" id="CLU_076228_1_2_1"/>
<dbReference type="InParanoid" id="Q95UQ1"/>
<dbReference type="OMA" id="YKPTAAK"/>
<dbReference type="PhylomeDB" id="Q95UQ1"/>
<dbReference type="Reactome" id="R-DDI-9013148">
    <property type="pathway name" value="CDC42 GTPase cycle"/>
</dbReference>
<dbReference type="Reactome" id="R-DDI-9013149">
    <property type="pathway name" value="RAC1 GTPase cycle"/>
</dbReference>
<dbReference type="Reactome" id="R-DDI-9013404">
    <property type="pathway name" value="RAC2 GTPase cycle"/>
</dbReference>
<dbReference type="Reactome" id="R-DDI-9013407">
    <property type="pathway name" value="RHOH GTPase cycle"/>
</dbReference>
<dbReference type="Reactome" id="R-DDI-9013408">
    <property type="pathway name" value="RHOG GTPase cycle"/>
</dbReference>
<dbReference type="Reactome" id="R-DDI-9013423">
    <property type="pathway name" value="RAC3 GTPase cycle"/>
</dbReference>
<dbReference type="PRO" id="PR:Q95UQ1"/>
<dbReference type="Proteomes" id="UP000002195">
    <property type="component" value="Chromosome 5"/>
</dbReference>
<dbReference type="GO" id="GO:0005737">
    <property type="term" value="C:cytoplasm"/>
    <property type="evidence" value="ECO:0007669"/>
    <property type="project" value="UniProtKB-SubCell"/>
</dbReference>
<dbReference type="GO" id="GO:0016020">
    <property type="term" value="C:membrane"/>
    <property type="evidence" value="ECO:0000318"/>
    <property type="project" value="GO_Central"/>
</dbReference>
<dbReference type="GO" id="GO:0140220">
    <property type="term" value="C:pathogen-containing vacuole"/>
    <property type="evidence" value="ECO:0007005"/>
    <property type="project" value="dictyBase"/>
</dbReference>
<dbReference type="GO" id="GO:0005096">
    <property type="term" value="F:GTPase activator activity"/>
    <property type="evidence" value="ECO:0007669"/>
    <property type="project" value="UniProtKB-KW"/>
</dbReference>
<dbReference type="GO" id="GO:0005094">
    <property type="term" value="F:Rho GDP-dissociation inhibitor activity"/>
    <property type="evidence" value="ECO:0000318"/>
    <property type="project" value="GO_Central"/>
</dbReference>
<dbReference type="GO" id="GO:0031267">
    <property type="term" value="F:small GTPase binding"/>
    <property type="evidence" value="ECO:0000304"/>
    <property type="project" value="dictyBase"/>
</dbReference>
<dbReference type="GO" id="GO:0030036">
    <property type="term" value="P:actin cytoskeleton organization"/>
    <property type="evidence" value="ECO:0000315"/>
    <property type="project" value="dictyBase"/>
</dbReference>
<dbReference type="GO" id="GO:0000902">
    <property type="term" value="P:cell morphogenesis"/>
    <property type="evidence" value="ECO:0000304"/>
    <property type="project" value="dictyBase"/>
</dbReference>
<dbReference type="GO" id="GO:0000281">
    <property type="term" value="P:mitotic cytokinesis"/>
    <property type="evidence" value="ECO:0000315"/>
    <property type="project" value="dictyBase"/>
</dbReference>
<dbReference type="GO" id="GO:0006907">
    <property type="term" value="P:pinocytosis"/>
    <property type="evidence" value="ECO:0000315"/>
    <property type="project" value="dictyBase"/>
</dbReference>
<dbReference type="GO" id="GO:0035023">
    <property type="term" value="P:regulation of Rho protein signal transduction"/>
    <property type="evidence" value="ECO:0000315"/>
    <property type="project" value="dictyBase"/>
</dbReference>
<dbReference type="GO" id="GO:0009617">
    <property type="term" value="P:response to bacterium"/>
    <property type="evidence" value="ECO:0007007"/>
    <property type="project" value="dictyBase"/>
</dbReference>
<dbReference type="GO" id="GO:0007266">
    <property type="term" value="P:Rho protein signal transduction"/>
    <property type="evidence" value="ECO:0000318"/>
    <property type="project" value="GO_Central"/>
</dbReference>
<dbReference type="FunFam" id="2.70.50.30:FF:000004">
    <property type="entry name" value="Rho GDP-dissociation inhibitor 1"/>
    <property type="match status" value="1"/>
</dbReference>
<dbReference type="Gene3D" id="2.70.50.30">
    <property type="entry name" value="Coagulation Factor XIII, subunit A, domain 1"/>
    <property type="match status" value="1"/>
</dbReference>
<dbReference type="InterPro" id="IPR014756">
    <property type="entry name" value="Ig_E-set"/>
</dbReference>
<dbReference type="InterPro" id="IPR000406">
    <property type="entry name" value="Rho_GDI"/>
</dbReference>
<dbReference type="InterPro" id="IPR024792">
    <property type="entry name" value="RhoGDI_dom_sf"/>
</dbReference>
<dbReference type="PANTHER" id="PTHR10980:SF3">
    <property type="entry name" value="LD16419P"/>
    <property type="match status" value="1"/>
</dbReference>
<dbReference type="PANTHER" id="PTHR10980">
    <property type="entry name" value="RHO GDP-DISSOCIATION INHIBITOR"/>
    <property type="match status" value="1"/>
</dbReference>
<dbReference type="Pfam" id="PF02115">
    <property type="entry name" value="Rho_GDI"/>
    <property type="match status" value="1"/>
</dbReference>
<dbReference type="PRINTS" id="PR00492">
    <property type="entry name" value="RHOGDI"/>
</dbReference>
<dbReference type="SUPFAM" id="SSF81296">
    <property type="entry name" value="E set domains"/>
    <property type="match status" value="1"/>
</dbReference>
<organism>
    <name type="scientific">Dictyostelium discoideum</name>
    <name type="common">Social amoeba</name>
    <dbReference type="NCBI Taxonomy" id="44689"/>
    <lineage>
        <taxon>Eukaryota</taxon>
        <taxon>Amoebozoa</taxon>
        <taxon>Evosea</taxon>
        <taxon>Eumycetozoa</taxon>
        <taxon>Dictyostelia</taxon>
        <taxon>Dictyosteliales</taxon>
        <taxon>Dictyosteliaceae</taxon>
        <taxon>Dictyostelium</taxon>
    </lineage>
</organism>
<keyword id="KW-0131">Cell cycle</keyword>
<keyword id="KW-0132">Cell division</keyword>
<keyword id="KW-0963">Cytoplasm</keyword>
<keyword id="KW-0343">GTPase activation</keyword>
<keyword id="KW-1185">Reference proteome</keyword>
<evidence type="ECO:0000250" key="1"/>
<evidence type="ECO:0000269" key="2">
    <source>
    </source>
</evidence>
<evidence type="ECO:0000269" key="3">
    <source>
    </source>
</evidence>
<evidence type="ECO:0000269" key="4">
    <source>
    </source>
</evidence>
<evidence type="ECO:0000305" key="5"/>
<reference key="1">
    <citation type="journal article" date="2002" name="EMBO J.">
        <title>Defects in cytokinesis, actin reorganization and the contractile vacuole in cells deficient in RhoGDI.</title>
        <authorList>
            <person name="Rivero F."/>
            <person name="Illenberger D."/>
            <person name="Somesh B.P."/>
            <person name="Dislich H."/>
            <person name="Adam N."/>
            <person name="Meyer A.-K."/>
        </authorList>
    </citation>
    <scope>NUCLEOTIDE SEQUENCE [GENOMIC DNA]</scope>
    <scope>INTERACTION WITH RAC1A; RAC1B; RAC1C; RACB; RACC AND RACE</scope>
    <scope>FUNCTION</scope>
</reference>
<reference key="2">
    <citation type="journal article" date="2005" name="Nature">
        <title>The genome of the social amoeba Dictyostelium discoideum.</title>
        <authorList>
            <person name="Eichinger L."/>
            <person name="Pachebat J.A."/>
            <person name="Gloeckner G."/>
            <person name="Rajandream M.A."/>
            <person name="Sucgang R."/>
            <person name="Berriman M."/>
            <person name="Song J."/>
            <person name="Olsen R."/>
            <person name="Szafranski K."/>
            <person name="Xu Q."/>
            <person name="Tunggal B."/>
            <person name="Kummerfeld S."/>
            <person name="Madera M."/>
            <person name="Konfortov B.A."/>
            <person name="Rivero F."/>
            <person name="Bankier A.T."/>
            <person name="Lehmann R."/>
            <person name="Hamlin N."/>
            <person name="Davies R."/>
            <person name="Gaudet P."/>
            <person name="Fey P."/>
            <person name="Pilcher K."/>
            <person name="Chen G."/>
            <person name="Saunders D."/>
            <person name="Sodergren E.J."/>
            <person name="Davis P."/>
            <person name="Kerhornou A."/>
            <person name="Nie X."/>
            <person name="Hall N."/>
            <person name="Anjard C."/>
            <person name="Hemphill L."/>
            <person name="Bason N."/>
            <person name="Farbrother P."/>
            <person name="Desany B."/>
            <person name="Just E."/>
            <person name="Morio T."/>
            <person name="Rost R."/>
            <person name="Churcher C.M."/>
            <person name="Cooper J."/>
            <person name="Haydock S."/>
            <person name="van Driessche N."/>
            <person name="Cronin A."/>
            <person name="Goodhead I."/>
            <person name="Muzny D.M."/>
            <person name="Mourier T."/>
            <person name="Pain A."/>
            <person name="Lu M."/>
            <person name="Harper D."/>
            <person name="Lindsay R."/>
            <person name="Hauser H."/>
            <person name="James K.D."/>
            <person name="Quiles M."/>
            <person name="Madan Babu M."/>
            <person name="Saito T."/>
            <person name="Buchrieser C."/>
            <person name="Wardroper A."/>
            <person name="Felder M."/>
            <person name="Thangavelu M."/>
            <person name="Johnson D."/>
            <person name="Knights A."/>
            <person name="Loulseged H."/>
            <person name="Mungall K.L."/>
            <person name="Oliver K."/>
            <person name="Price C."/>
            <person name="Quail M.A."/>
            <person name="Urushihara H."/>
            <person name="Hernandez J."/>
            <person name="Rabbinowitsch E."/>
            <person name="Steffen D."/>
            <person name="Sanders M."/>
            <person name="Ma J."/>
            <person name="Kohara Y."/>
            <person name="Sharp S."/>
            <person name="Simmonds M.N."/>
            <person name="Spiegler S."/>
            <person name="Tivey A."/>
            <person name="Sugano S."/>
            <person name="White B."/>
            <person name="Walker D."/>
            <person name="Woodward J.R."/>
            <person name="Winckler T."/>
            <person name="Tanaka Y."/>
            <person name="Shaulsky G."/>
            <person name="Schleicher M."/>
            <person name="Weinstock G.M."/>
            <person name="Rosenthal A."/>
            <person name="Cox E.C."/>
            <person name="Chisholm R.L."/>
            <person name="Gibbs R.A."/>
            <person name="Loomis W.F."/>
            <person name="Platzer M."/>
            <person name="Kay R.R."/>
            <person name="Williams J.G."/>
            <person name="Dear P.H."/>
            <person name="Noegel A.A."/>
            <person name="Barrell B.G."/>
            <person name="Kuspa A."/>
        </authorList>
    </citation>
    <scope>NUCLEOTIDE SEQUENCE [LARGE SCALE GENOMIC DNA]</scope>
    <source>
        <strain>AX4</strain>
    </source>
</reference>
<reference key="3">
    <citation type="journal article" date="2002" name="Biochem. Biophys. Res. Commun.">
        <title>A Rho GDP-dissociation inhibitor is involved in cytokinesis of Dictyostelium.</title>
        <authorList>
            <person name="Imai K."/>
            <person name="Kijima T."/>
            <person name="Noda Y."/>
            <person name="Sutoh K."/>
            <person name="Yoda K."/>
            <person name="Adachi H."/>
        </authorList>
    </citation>
    <scope>FUNCTION</scope>
    <scope>INTERACTION WITH RAC1A; RAC1B; RAC1C; RACB; RACC AND RACE</scope>
</reference>
<reference key="4">
    <citation type="journal article" date="2009" name="Exp. Cell Res.">
        <title>Microarray phenotyping places cyclase associated protein CAP at the crossroad of signaling pathways reorganizing the actin cytoskeleton in Dictyostelium.</title>
        <authorList>
            <person name="Sultana H."/>
            <person name="Neelakanta G."/>
            <person name="Eichinger L."/>
            <person name="Rivero F."/>
            <person name="Noegel A.A."/>
        </authorList>
    </citation>
    <scope>INDUCTION</scope>
    <scope>FUNCTION</scope>
    <scope>SUBCELLULAR LOCATION</scope>
</reference>
<protein>
    <recommendedName>
        <fullName>Putative rho GDP-dissociation inhibitor 1</fullName>
    </recommendedName>
</protein>
<name>GDIR1_DICDI</name>
<proteinExistence type="evidence at protein level"/>
<sequence>MSDNHEEESNVPAYVPGKHVSVDQLKQQDAEDEALKRYKESLLGTGVHAPKDDPRKLVIKEMKIQIEGRPDTIYPLDTKELIKEMKTKPFVLKESCHYKITLTFNIQHDIVSGLKQTNTVYRKGIKVSTEKHMLGSFAPQALAHSVTNPRHGWEEAPSGMLARGSYTAKVVFTDDDNEEHLSVEYAFSIKSDWKSDD</sequence>
<comment type="function">
    <text evidence="1 2 3 4">Regulates the GDP/GTP exchange reaction of the Rho proteins by inhibiting the dissociation of GDP from them, and the subsequent binding of GTP to them (By similarity). Regulates the Rac-dependent signaling pathways controlling cytokinesis, actin reorganization and the contractile vacuole. Required for efficient accumulation of cap at the cell cortex.</text>
</comment>
<comment type="subunit">
    <text evidence="2 3">Interacts with rac1A, rac1B, rac1C, racB, raCC and RacE.</text>
</comment>
<comment type="subcellular location">
    <subcellularLocation>
        <location evidence="4">Cytoplasm</location>
    </subcellularLocation>
</comment>
<comment type="induction">
    <text evidence="4">Down-regulated in the absence of cap.</text>
</comment>
<comment type="similarity">
    <text evidence="5">Belongs to the Rho GDI family.</text>
</comment>
<gene>
    <name type="primary">rdiA</name>
    <name type="synonym">RhoGDI1</name>
    <name type="ORF">DDB_G0291077</name>
</gene>
<accession>Q95UQ1</accession>
<accession>Q54F58</accession>